<comment type="function">
    <text evidence="1">Negatively regulates transcription of bacterial ribonucleotide reductase nrd genes and operons by binding to NrdR-boxes.</text>
</comment>
<comment type="cofactor">
    <cofactor evidence="1">
        <name>Zn(2+)</name>
        <dbReference type="ChEBI" id="CHEBI:29105"/>
    </cofactor>
    <text evidence="1">Binds 1 zinc ion.</text>
</comment>
<comment type="similarity">
    <text evidence="1">Belongs to the NrdR family.</text>
</comment>
<reference key="1">
    <citation type="journal article" date="2004" name="Nat. Biotechnol.">
        <title>The genome sequence of the capnophilic rumen bacterium Mannheimia succiniciproducens.</title>
        <authorList>
            <person name="Hong S.H."/>
            <person name="Kim J.S."/>
            <person name="Lee S.Y."/>
            <person name="In Y.H."/>
            <person name="Choi S.S."/>
            <person name="Rih J.-K."/>
            <person name="Kim C.H."/>
            <person name="Jeong H."/>
            <person name="Hur C.G."/>
            <person name="Kim J.J."/>
        </authorList>
    </citation>
    <scope>NUCLEOTIDE SEQUENCE [LARGE SCALE GENOMIC DNA]</scope>
    <source>
        <strain>KCTC 0769BP / MBEL55E</strain>
    </source>
</reference>
<gene>
    <name evidence="1" type="primary">nrdR</name>
    <name type="ordered locus">MS1375</name>
</gene>
<organism>
    <name type="scientific">Mannheimia succiniciproducens (strain KCTC 0769BP / MBEL55E)</name>
    <dbReference type="NCBI Taxonomy" id="221988"/>
    <lineage>
        <taxon>Bacteria</taxon>
        <taxon>Pseudomonadati</taxon>
        <taxon>Pseudomonadota</taxon>
        <taxon>Gammaproteobacteria</taxon>
        <taxon>Pasteurellales</taxon>
        <taxon>Pasteurellaceae</taxon>
        <taxon>Basfia</taxon>
    </lineage>
</organism>
<accession>Q65SS8</accession>
<feature type="chain" id="PRO_0000182316" description="Transcriptional repressor NrdR">
    <location>
        <begin position="1"/>
        <end position="149"/>
    </location>
</feature>
<feature type="domain" description="ATP-cone" evidence="1">
    <location>
        <begin position="49"/>
        <end position="139"/>
    </location>
</feature>
<feature type="zinc finger region" evidence="1">
    <location>
        <begin position="3"/>
        <end position="34"/>
    </location>
</feature>
<sequence>MHCPFCSTEETKVIDSRLVSDGYQVRRRRECTKCHERFTTFETAELVVPKIIKNNGMREPFNEDKLRRGIQHALEKRPVSADDVEKAISHITHQLRATGEREVPSKLVGSLVMEELKKLDKVAYIRFASVYLSFENINEFSNEIEKLKD</sequence>
<evidence type="ECO:0000255" key="1">
    <source>
        <dbReference type="HAMAP-Rule" id="MF_00440"/>
    </source>
</evidence>
<dbReference type="EMBL" id="AE016827">
    <property type="protein sequence ID" value="AAU37982.1"/>
    <property type="molecule type" value="Genomic_DNA"/>
</dbReference>
<dbReference type="RefSeq" id="WP_011200549.1">
    <property type="nucleotide sequence ID" value="NC_006300.1"/>
</dbReference>
<dbReference type="SMR" id="Q65SS8"/>
<dbReference type="STRING" id="221988.MS1375"/>
<dbReference type="KEGG" id="msu:MS1375"/>
<dbReference type="eggNOG" id="COG1327">
    <property type="taxonomic scope" value="Bacteria"/>
</dbReference>
<dbReference type="HOGENOM" id="CLU_108412_0_0_6"/>
<dbReference type="OrthoDB" id="9807461at2"/>
<dbReference type="Proteomes" id="UP000000607">
    <property type="component" value="Chromosome"/>
</dbReference>
<dbReference type="GO" id="GO:0005524">
    <property type="term" value="F:ATP binding"/>
    <property type="evidence" value="ECO:0007669"/>
    <property type="project" value="UniProtKB-KW"/>
</dbReference>
<dbReference type="GO" id="GO:0003677">
    <property type="term" value="F:DNA binding"/>
    <property type="evidence" value="ECO:0007669"/>
    <property type="project" value="UniProtKB-KW"/>
</dbReference>
<dbReference type="GO" id="GO:0008270">
    <property type="term" value="F:zinc ion binding"/>
    <property type="evidence" value="ECO:0007669"/>
    <property type="project" value="UniProtKB-UniRule"/>
</dbReference>
<dbReference type="GO" id="GO:0045892">
    <property type="term" value="P:negative regulation of DNA-templated transcription"/>
    <property type="evidence" value="ECO:0007669"/>
    <property type="project" value="UniProtKB-UniRule"/>
</dbReference>
<dbReference type="HAMAP" id="MF_00440">
    <property type="entry name" value="NrdR"/>
    <property type="match status" value="1"/>
</dbReference>
<dbReference type="InterPro" id="IPR005144">
    <property type="entry name" value="ATP-cone_dom"/>
</dbReference>
<dbReference type="InterPro" id="IPR055173">
    <property type="entry name" value="NrdR-like_N"/>
</dbReference>
<dbReference type="InterPro" id="IPR003796">
    <property type="entry name" value="RNR_NrdR-like"/>
</dbReference>
<dbReference type="NCBIfam" id="TIGR00244">
    <property type="entry name" value="transcriptional regulator NrdR"/>
    <property type="match status" value="1"/>
</dbReference>
<dbReference type="PANTHER" id="PTHR30455">
    <property type="entry name" value="TRANSCRIPTIONAL REPRESSOR NRDR"/>
    <property type="match status" value="1"/>
</dbReference>
<dbReference type="PANTHER" id="PTHR30455:SF2">
    <property type="entry name" value="TRANSCRIPTIONAL REPRESSOR NRDR"/>
    <property type="match status" value="1"/>
</dbReference>
<dbReference type="Pfam" id="PF03477">
    <property type="entry name" value="ATP-cone"/>
    <property type="match status" value="1"/>
</dbReference>
<dbReference type="Pfam" id="PF22811">
    <property type="entry name" value="Zn_ribbon_NrdR"/>
    <property type="match status" value="1"/>
</dbReference>
<dbReference type="PROSITE" id="PS51161">
    <property type="entry name" value="ATP_CONE"/>
    <property type="match status" value="1"/>
</dbReference>
<proteinExistence type="inferred from homology"/>
<keyword id="KW-0067">ATP-binding</keyword>
<keyword id="KW-0238">DNA-binding</keyword>
<keyword id="KW-0479">Metal-binding</keyword>
<keyword id="KW-0547">Nucleotide-binding</keyword>
<keyword id="KW-0678">Repressor</keyword>
<keyword id="KW-0804">Transcription</keyword>
<keyword id="KW-0805">Transcription regulation</keyword>
<keyword id="KW-0862">Zinc</keyword>
<keyword id="KW-0863">Zinc-finger</keyword>
<protein>
    <recommendedName>
        <fullName evidence="1">Transcriptional repressor NrdR</fullName>
    </recommendedName>
</protein>
<name>NRDR_MANSM</name>